<feature type="chain" id="PRO_0000107670" description="Probable butyrate kinase">
    <location>
        <begin position="1"/>
        <end position="355"/>
    </location>
</feature>
<keyword id="KW-0067">ATP-binding</keyword>
<keyword id="KW-0963">Cytoplasm</keyword>
<keyword id="KW-0418">Kinase</keyword>
<keyword id="KW-0547">Nucleotide-binding</keyword>
<keyword id="KW-0808">Transferase</keyword>
<name>BUK_LISIN</name>
<sequence length="355" mass="38891">MSYDVLTINPGSTSTKLAVYHGDKVLFEETVRHTMQEFADFNNVQEQFDFRWQVLRRVIDAFGYDVNKLDAVVGRGGLLRPVAGGTYMVTEKMLADLKNNKYGEHASNLGAMLAKKLADKLGIPSFIVDPVVVDEMQPVARFSGNELIARKSIFHALNHKAAGRKIAKELGSEYEKMNFVIAHLGGGISVAAHRQGKAVDVNNALDGDGPFSPERSGSLPMNDFLEACFSGKWTKRELHELIVGRGGMISYLGTNSMLDVENKVQAGDEDAIKAFDAMAYQVSKEIGACSVVLHGKIDAIILTGGLARSELFTSKIIEQTNWIARVIIEPGEDELEALNSGVQRVLAGIEKEKVY</sequence>
<proteinExistence type="inferred from homology"/>
<evidence type="ECO:0000255" key="1">
    <source>
        <dbReference type="HAMAP-Rule" id="MF_00542"/>
    </source>
</evidence>
<accession>Q92BY5</accession>
<protein>
    <recommendedName>
        <fullName evidence="1">Probable butyrate kinase</fullName>
        <shortName evidence="1">BK</shortName>
        <ecNumber evidence="1">2.7.2.7</ecNumber>
    </recommendedName>
    <alternativeName>
        <fullName evidence="1">Branched-chain carboxylic acid kinase</fullName>
    </alternativeName>
</protein>
<reference key="1">
    <citation type="journal article" date="2001" name="Science">
        <title>Comparative genomics of Listeria species.</title>
        <authorList>
            <person name="Glaser P."/>
            <person name="Frangeul L."/>
            <person name="Buchrieser C."/>
            <person name="Rusniok C."/>
            <person name="Amend A."/>
            <person name="Baquero F."/>
            <person name="Berche P."/>
            <person name="Bloecker H."/>
            <person name="Brandt P."/>
            <person name="Chakraborty T."/>
            <person name="Charbit A."/>
            <person name="Chetouani F."/>
            <person name="Couve E."/>
            <person name="de Daruvar A."/>
            <person name="Dehoux P."/>
            <person name="Domann E."/>
            <person name="Dominguez-Bernal G."/>
            <person name="Duchaud E."/>
            <person name="Durant L."/>
            <person name="Dussurget O."/>
            <person name="Entian K.-D."/>
            <person name="Fsihi H."/>
            <person name="Garcia-del Portillo F."/>
            <person name="Garrido P."/>
            <person name="Gautier L."/>
            <person name="Goebel W."/>
            <person name="Gomez-Lopez N."/>
            <person name="Hain T."/>
            <person name="Hauf J."/>
            <person name="Jackson D."/>
            <person name="Jones L.-M."/>
            <person name="Kaerst U."/>
            <person name="Kreft J."/>
            <person name="Kuhn M."/>
            <person name="Kunst F."/>
            <person name="Kurapkat G."/>
            <person name="Madueno E."/>
            <person name="Maitournam A."/>
            <person name="Mata Vicente J."/>
            <person name="Ng E."/>
            <person name="Nedjari H."/>
            <person name="Nordsiek G."/>
            <person name="Novella S."/>
            <person name="de Pablos B."/>
            <person name="Perez-Diaz J.-C."/>
            <person name="Purcell R."/>
            <person name="Remmel B."/>
            <person name="Rose M."/>
            <person name="Schlueter T."/>
            <person name="Simoes N."/>
            <person name="Tierrez A."/>
            <person name="Vazquez-Boland J.-A."/>
            <person name="Voss H."/>
            <person name="Wehland J."/>
            <person name="Cossart P."/>
        </authorList>
    </citation>
    <scope>NUCLEOTIDE SEQUENCE [LARGE SCALE GENOMIC DNA]</scope>
    <source>
        <strain>ATCC BAA-680 / CLIP 11262</strain>
    </source>
</reference>
<dbReference type="EC" id="2.7.2.7" evidence="1"/>
<dbReference type="EMBL" id="AL596168">
    <property type="protein sequence ID" value="CAC96638.1"/>
    <property type="molecule type" value="Genomic_DNA"/>
</dbReference>
<dbReference type="PIR" id="AF1608">
    <property type="entry name" value="AF1608"/>
</dbReference>
<dbReference type="RefSeq" id="WP_010991519.1">
    <property type="nucleotide sequence ID" value="NC_003212.1"/>
</dbReference>
<dbReference type="SMR" id="Q92BY5"/>
<dbReference type="STRING" id="272626.gene:17565738"/>
<dbReference type="KEGG" id="lin:lin1407"/>
<dbReference type="eggNOG" id="COG3426">
    <property type="taxonomic scope" value="Bacteria"/>
</dbReference>
<dbReference type="HOGENOM" id="CLU_048716_0_0_9"/>
<dbReference type="OrthoDB" id="9771859at2"/>
<dbReference type="Proteomes" id="UP000002513">
    <property type="component" value="Chromosome"/>
</dbReference>
<dbReference type="GO" id="GO:0005737">
    <property type="term" value="C:cytoplasm"/>
    <property type="evidence" value="ECO:0007669"/>
    <property type="project" value="UniProtKB-SubCell"/>
</dbReference>
<dbReference type="GO" id="GO:0008776">
    <property type="term" value="F:acetate kinase activity"/>
    <property type="evidence" value="ECO:0007669"/>
    <property type="project" value="TreeGrafter"/>
</dbReference>
<dbReference type="GO" id="GO:0005524">
    <property type="term" value="F:ATP binding"/>
    <property type="evidence" value="ECO:0007669"/>
    <property type="project" value="UniProtKB-KW"/>
</dbReference>
<dbReference type="GO" id="GO:0047761">
    <property type="term" value="F:butyrate kinase activity"/>
    <property type="evidence" value="ECO:0007669"/>
    <property type="project" value="UniProtKB-UniRule"/>
</dbReference>
<dbReference type="GO" id="GO:0006083">
    <property type="term" value="P:acetate metabolic process"/>
    <property type="evidence" value="ECO:0007669"/>
    <property type="project" value="TreeGrafter"/>
</dbReference>
<dbReference type="CDD" id="cd24011">
    <property type="entry name" value="ASKHA_NBD_BK"/>
    <property type="match status" value="1"/>
</dbReference>
<dbReference type="FunFam" id="3.30.420.40:FF:000233">
    <property type="entry name" value="Probable butyrate kinase"/>
    <property type="match status" value="1"/>
</dbReference>
<dbReference type="Gene3D" id="3.30.420.40">
    <property type="match status" value="2"/>
</dbReference>
<dbReference type="HAMAP" id="MF_00542">
    <property type="entry name" value="Butyrate_kinase"/>
    <property type="match status" value="1"/>
</dbReference>
<dbReference type="InterPro" id="IPR000890">
    <property type="entry name" value="Aliphatic_acid_kin_short-chain"/>
</dbReference>
<dbReference type="InterPro" id="IPR023865">
    <property type="entry name" value="Aliphatic_acid_kinase_CS"/>
</dbReference>
<dbReference type="InterPro" id="IPR043129">
    <property type="entry name" value="ATPase_NBD"/>
</dbReference>
<dbReference type="InterPro" id="IPR011245">
    <property type="entry name" value="Butyrate_kin"/>
</dbReference>
<dbReference type="NCBIfam" id="TIGR02707">
    <property type="entry name" value="butyr_kinase"/>
    <property type="match status" value="1"/>
</dbReference>
<dbReference type="NCBIfam" id="NF002834">
    <property type="entry name" value="PRK03011.1-5"/>
    <property type="match status" value="1"/>
</dbReference>
<dbReference type="PANTHER" id="PTHR21060">
    <property type="entry name" value="ACETATE KINASE"/>
    <property type="match status" value="1"/>
</dbReference>
<dbReference type="PANTHER" id="PTHR21060:SF3">
    <property type="entry name" value="BUTYRATE KINASE 2-RELATED"/>
    <property type="match status" value="1"/>
</dbReference>
<dbReference type="Pfam" id="PF00871">
    <property type="entry name" value="Acetate_kinase"/>
    <property type="match status" value="1"/>
</dbReference>
<dbReference type="PIRSF" id="PIRSF036458">
    <property type="entry name" value="Butyrate_kin"/>
    <property type="match status" value="1"/>
</dbReference>
<dbReference type="PRINTS" id="PR00471">
    <property type="entry name" value="ACETATEKNASE"/>
</dbReference>
<dbReference type="SUPFAM" id="SSF53067">
    <property type="entry name" value="Actin-like ATPase domain"/>
    <property type="match status" value="2"/>
</dbReference>
<dbReference type="PROSITE" id="PS01075">
    <property type="entry name" value="ACETATE_KINASE_1"/>
    <property type="match status" value="1"/>
</dbReference>
<dbReference type="PROSITE" id="PS01076">
    <property type="entry name" value="ACETATE_KINASE_2"/>
    <property type="match status" value="1"/>
</dbReference>
<comment type="catalytic activity">
    <reaction evidence="1">
        <text>butanoate + ATP = butanoyl phosphate + ADP</text>
        <dbReference type="Rhea" id="RHEA:13585"/>
        <dbReference type="ChEBI" id="CHEBI:17968"/>
        <dbReference type="ChEBI" id="CHEBI:30616"/>
        <dbReference type="ChEBI" id="CHEBI:58079"/>
        <dbReference type="ChEBI" id="CHEBI:456216"/>
        <dbReference type="EC" id="2.7.2.7"/>
    </reaction>
</comment>
<comment type="subcellular location">
    <subcellularLocation>
        <location evidence="1">Cytoplasm</location>
    </subcellularLocation>
</comment>
<comment type="similarity">
    <text evidence="1">Belongs to the acetokinase family.</text>
</comment>
<organism>
    <name type="scientific">Listeria innocua serovar 6a (strain ATCC BAA-680 / CLIP 11262)</name>
    <dbReference type="NCBI Taxonomy" id="272626"/>
    <lineage>
        <taxon>Bacteria</taxon>
        <taxon>Bacillati</taxon>
        <taxon>Bacillota</taxon>
        <taxon>Bacilli</taxon>
        <taxon>Bacillales</taxon>
        <taxon>Listeriaceae</taxon>
        <taxon>Listeria</taxon>
    </lineage>
</organism>
<gene>
    <name evidence="1" type="primary">buk</name>
    <name type="ordered locus">lin1407</name>
</gene>